<dbReference type="EMBL" id="X61945">
    <property type="protein sequence ID" value="CAA43951.1"/>
    <property type="molecule type" value="Genomic_DNA"/>
</dbReference>
<dbReference type="EMBL" id="AE014298">
    <property type="protein sequence ID" value="AAF45854.1"/>
    <property type="molecule type" value="Genomic_DNA"/>
</dbReference>
<dbReference type="EMBL" id="AL024484">
    <property type="protein sequence ID" value="CAA19671.1"/>
    <property type="molecule type" value="Genomic_DNA"/>
</dbReference>
<dbReference type="EMBL" id="AY113385">
    <property type="protein sequence ID" value="AAM29390.1"/>
    <property type="molecule type" value="mRNA"/>
</dbReference>
<dbReference type="PIR" id="S33822">
    <property type="entry name" value="S33822"/>
</dbReference>
<dbReference type="RefSeq" id="NP_476941.2">
    <property type="nucleotide sequence ID" value="NM_057593.4"/>
</dbReference>
<dbReference type="BioGRID" id="57827">
    <property type="interactions" value="11"/>
</dbReference>
<dbReference type="DIP" id="DIP-21704N"/>
<dbReference type="IntAct" id="P40139">
    <property type="interactions" value="11"/>
</dbReference>
<dbReference type="DNASU" id="31298"/>
<dbReference type="EnsemblMetazoa" id="FBtr0070540">
    <property type="protein sequence ID" value="FBpp0070515"/>
    <property type="gene ID" value="FBgn0010294"/>
</dbReference>
<dbReference type="GeneID" id="31298"/>
<dbReference type="KEGG" id="dme:Dmel_CG14266"/>
<dbReference type="AGR" id="FB:FBgn0010294"/>
<dbReference type="CTD" id="31298"/>
<dbReference type="FlyBase" id="FBgn0010294">
    <property type="gene designation" value="ng2"/>
</dbReference>
<dbReference type="VEuPathDB" id="VectorBase:FBgn0010294"/>
<dbReference type="GeneTree" id="ENSGT00940000182382"/>
<dbReference type="HOGENOM" id="CLU_138139_1_1_1"/>
<dbReference type="InParanoid" id="P40139"/>
<dbReference type="OMA" id="HWKRRVH"/>
<dbReference type="PhylomeDB" id="P40139"/>
<dbReference type="SignaLink" id="P40139"/>
<dbReference type="BioGRID-ORCS" id="31298">
    <property type="hits" value="0 hits in 1 CRISPR screen"/>
</dbReference>
<dbReference type="GenomeRNAi" id="31298"/>
<dbReference type="PRO" id="PR:P40139"/>
<dbReference type="Proteomes" id="UP000000803">
    <property type="component" value="Chromosome X"/>
</dbReference>
<dbReference type="Bgee" id="FBgn0010294">
    <property type="expression patterns" value="Expressed in saliva-secreting gland and 5 other cell types or tissues"/>
</dbReference>
<dbReference type="ExpressionAtlas" id="P40139">
    <property type="expression patterns" value="baseline and differential"/>
</dbReference>
<dbReference type="GO" id="GO:0005576">
    <property type="term" value="C:extracellular region"/>
    <property type="evidence" value="ECO:0007669"/>
    <property type="project" value="UniProtKB-SubCell"/>
</dbReference>
<dbReference type="InterPro" id="IPR054054">
    <property type="entry name" value="Ng_1-3-like"/>
</dbReference>
<dbReference type="Pfam" id="PF21827">
    <property type="entry name" value="New_glue"/>
    <property type="match status" value="1"/>
</dbReference>
<organism>
    <name type="scientific">Drosophila melanogaster</name>
    <name type="common">Fruit fly</name>
    <dbReference type="NCBI Taxonomy" id="7227"/>
    <lineage>
        <taxon>Eukaryota</taxon>
        <taxon>Metazoa</taxon>
        <taxon>Ecdysozoa</taxon>
        <taxon>Arthropoda</taxon>
        <taxon>Hexapoda</taxon>
        <taxon>Insecta</taxon>
        <taxon>Pterygota</taxon>
        <taxon>Neoptera</taxon>
        <taxon>Endopterygota</taxon>
        <taxon>Diptera</taxon>
        <taxon>Brachycera</taxon>
        <taxon>Muscomorpha</taxon>
        <taxon>Ephydroidea</taxon>
        <taxon>Drosophilidae</taxon>
        <taxon>Drosophila</taxon>
        <taxon>Sophophora</taxon>
    </lineage>
</organism>
<comment type="subcellular location">
    <subcellularLocation>
        <location evidence="3">Secreted</location>
    </subcellularLocation>
</comment>
<comment type="tissue specificity">
    <text>Salivary gland specific.</text>
</comment>
<comment type="developmental stage">
    <text>Abundant only during the third larval stage.</text>
</comment>
<comment type="similarity">
    <text evidence="3">To NG-1, also to SGS-3.</text>
</comment>
<sequence>MKITVVLVLLATFLGCVMIHESEASTTTTSTSASATTTTSASATTTTSASATTTTSASATTTTASPSSSSKKKTVTHYKRKVKRPKKVRKITRRRGLRSRNGRSSRNRRSEE</sequence>
<feature type="signal peptide" evidence="1">
    <location>
        <begin position="1"/>
        <end position="24"/>
    </location>
</feature>
<feature type="chain" id="PRO_0000021811" description="Protein new-glue 2">
    <location>
        <begin position="25"/>
        <end position="112"/>
    </location>
</feature>
<feature type="repeat" description="1">
    <location>
        <begin position="31"/>
        <end position="38"/>
    </location>
</feature>
<feature type="repeat" description="2">
    <location>
        <begin position="39"/>
        <end position="46"/>
    </location>
</feature>
<feature type="repeat" description="3">
    <location>
        <begin position="47"/>
        <end position="54"/>
    </location>
</feature>
<feature type="repeat" description="4">
    <location>
        <begin position="55"/>
        <end position="62"/>
    </location>
</feature>
<feature type="region of interest" description="Disordered" evidence="2">
    <location>
        <begin position="24"/>
        <end position="112"/>
    </location>
</feature>
<feature type="region of interest" description="4 X 8 AA tandem repeats of T-S-A-S-A-T-T-T">
    <location>
        <begin position="31"/>
        <end position="62"/>
    </location>
</feature>
<feature type="compositionally biased region" description="Low complexity" evidence="2">
    <location>
        <begin position="24"/>
        <end position="69"/>
    </location>
</feature>
<feature type="compositionally biased region" description="Basic residues" evidence="2">
    <location>
        <begin position="70"/>
        <end position="112"/>
    </location>
</feature>
<feature type="sequence conflict" description="In Ref. 1; CAA43951." evidence="3" ref="1">
    <original>L</original>
    <variation>F</variation>
    <location>
        <position position="14"/>
    </location>
</feature>
<feature type="sequence conflict" description="In Ref. 4; CAA19671." evidence="3" ref="4">
    <original>E</original>
    <variation>Q</variation>
    <location>
        <position position="21"/>
    </location>
</feature>
<reference key="1">
    <citation type="journal article" date="1993" name="J. Mol. Biol.">
        <title>Dense cluster of genes is located at the ecdysone-regulated 3C puff of Drosophila melanogaster.</title>
        <authorList>
            <person name="Furia M."/>
            <person name="D'Avino P.P."/>
            <person name="Crispi S."/>
            <person name="Artiaco D."/>
            <person name="Polito L.C."/>
        </authorList>
    </citation>
    <scope>NUCLEOTIDE SEQUENCE [GENOMIC DNA]</scope>
    <source>
        <strain>Oregon-R</strain>
        <tissue>Salivary gland</tissue>
    </source>
</reference>
<reference key="2">
    <citation type="journal article" date="2000" name="Science">
        <title>The genome sequence of Drosophila melanogaster.</title>
        <authorList>
            <person name="Adams M.D."/>
            <person name="Celniker S.E."/>
            <person name="Holt R.A."/>
            <person name="Evans C.A."/>
            <person name="Gocayne J.D."/>
            <person name="Amanatides P.G."/>
            <person name="Scherer S.E."/>
            <person name="Li P.W."/>
            <person name="Hoskins R.A."/>
            <person name="Galle R.F."/>
            <person name="George R.A."/>
            <person name="Lewis S.E."/>
            <person name="Richards S."/>
            <person name="Ashburner M."/>
            <person name="Henderson S.N."/>
            <person name="Sutton G.G."/>
            <person name="Wortman J.R."/>
            <person name="Yandell M.D."/>
            <person name="Zhang Q."/>
            <person name="Chen L.X."/>
            <person name="Brandon R.C."/>
            <person name="Rogers Y.-H.C."/>
            <person name="Blazej R.G."/>
            <person name="Champe M."/>
            <person name="Pfeiffer B.D."/>
            <person name="Wan K.H."/>
            <person name="Doyle C."/>
            <person name="Baxter E.G."/>
            <person name="Helt G."/>
            <person name="Nelson C.R."/>
            <person name="Miklos G.L.G."/>
            <person name="Abril J.F."/>
            <person name="Agbayani A."/>
            <person name="An H.-J."/>
            <person name="Andrews-Pfannkoch C."/>
            <person name="Baldwin D."/>
            <person name="Ballew R.M."/>
            <person name="Basu A."/>
            <person name="Baxendale J."/>
            <person name="Bayraktaroglu L."/>
            <person name="Beasley E.M."/>
            <person name="Beeson K.Y."/>
            <person name="Benos P.V."/>
            <person name="Berman B.P."/>
            <person name="Bhandari D."/>
            <person name="Bolshakov S."/>
            <person name="Borkova D."/>
            <person name="Botchan M.R."/>
            <person name="Bouck J."/>
            <person name="Brokstein P."/>
            <person name="Brottier P."/>
            <person name="Burtis K.C."/>
            <person name="Busam D.A."/>
            <person name="Butler H."/>
            <person name="Cadieu E."/>
            <person name="Center A."/>
            <person name="Chandra I."/>
            <person name="Cherry J.M."/>
            <person name="Cawley S."/>
            <person name="Dahlke C."/>
            <person name="Davenport L.B."/>
            <person name="Davies P."/>
            <person name="de Pablos B."/>
            <person name="Delcher A."/>
            <person name="Deng Z."/>
            <person name="Mays A.D."/>
            <person name="Dew I."/>
            <person name="Dietz S.M."/>
            <person name="Dodson K."/>
            <person name="Doup L.E."/>
            <person name="Downes M."/>
            <person name="Dugan-Rocha S."/>
            <person name="Dunkov B.C."/>
            <person name="Dunn P."/>
            <person name="Durbin K.J."/>
            <person name="Evangelista C.C."/>
            <person name="Ferraz C."/>
            <person name="Ferriera S."/>
            <person name="Fleischmann W."/>
            <person name="Fosler C."/>
            <person name="Gabrielian A.E."/>
            <person name="Garg N.S."/>
            <person name="Gelbart W.M."/>
            <person name="Glasser K."/>
            <person name="Glodek A."/>
            <person name="Gong F."/>
            <person name="Gorrell J.H."/>
            <person name="Gu Z."/>
            <person name="Guan P."/>
            <person name="Harris M."/>
            <person name="Harris N.L."/>
            <person name="Harvey D.A."/>
            <person name="Heiman T.J."/>
            <person name="Hernandez J.R."/>
            <person name="Houck J."/>
            <person name="Hostin D."/>
            <person name="Houston K.A."/>
            <person name="Howland T.J."/>
            <person name="Wei M.-H."/>
            <person name="Ibegwam C."/>
            <person name="Jalali M."/>
            <person name="Kalush F."/>
            <person name="Karpen G.H."/>
            <person name="Ke Z."/>
            <person name="Kennison J.A."/>
            <person name="Ketchum K.A."/>
            <person name="Kimmel B.E."/>
            <person name="Kodira C.D."/>
            <person name="Kraft C.L."/>
            <person name="Kravitz S."/>
            <person name="Kulp D."/>
            <person name="Lai Z."/>
            <person name="Lasko P."/>
            <person name="Lei Y."/>
            <person name="Levitsky A.A."/>
            <person name="Li J.H."/>
            <person name="Li Z."/>
            <person name="Liang Y."/>
            <person name="Lin X."/>
            <person name="Liu X."/>
            <person name="Mattei B."/>
            <person name="McIntosh T.C."/>
            <person name="McLeod M.P."/>
            <person name="McPherson D."/>
            <person name="Merkulov G."/>
            <person name="Milshina N.V."/>
            <person name="Mobarry C."/>
            <person name="Morris J."/>
            <person name="Moshrefi A."/>
            <person name="Mount S.M."/>
            <person name="Moy M."/>
            <person name="Murphy B."/>
            <person name="Murphy L."/>
            <person name="Muzny D.M."/>
            <person name="Nelson D.L."/>
            <person name="Nelson D.R."/>
            <person name="Nelson K.A."/>
            <person name="Nixon K."/>
            <person name="Nusskern D.R."/>
            <person name="Pacleb J.M."/>
            <person name="Palazzolo M."/>
            <person name="Pittman G.S."/>
            <person name="Pan S."/>
            <person name="Pollard J."/>
            <person name="Puri V."/>
            <person name="Reese M.G."/>
            <person name="Reinert K."/>
            <person name="Remington K."/>
            <person name="Saunders R.D.C."/>
            <person name="Scheeler F."/>
            <person name="Shen H."/>
            <person name="Shue B.C."/>
            <person name="Siden-Kiamos I."/>
            <person name="Simpson M."/>
            <person name="Skupski M.P."/>
            <person name="Smith T.J."/>
            <person name="Spier E."/>
            <person name="Spradling A.C."/>
            <person name="Stapleton M."/>
            <person name="Strong R."/>
            <person name="Sun E."/>
            <person name="Svirskas R."/>
            <person name="Tector C."/>
            <person name="Turner R."/>
            <person name="Venter E."/>
            <person name="Wang A.H."/>
            <person name="Wang X."/>
            <person name="Wang Z.-Y."/>
            <person name="Wassarman D.A."/>
            <person name="Weinstock G.M."/>
            <person name="Weissenbach J."/>
            <person name="Williams S.M."/>
            <person name="Woodage T."/>
            <person name="Worley K.C."/>
            <person name="Wu D."/>
            <person name="Yang S."/>
            <person name="Yao Q.A."/>
            <person name="Ye J."/>
            <person name="Yeh R.-F."/>
            <person name="Zaveri J.S."/>
            <person name="Zhan M."/>
            <person name="Zhang G."/>
            <person name="Zhao Q."/>
            <person name="Zheng L."/>
            <person name="Zheng X.H."/>
            <person name="Zhong F.N."/>
            <person name="Zhong W."/>
            <person name="Zhou X."/>
            <person name="Zhu S.C."/>
            <person name="Zhu X."/>
            <person name="Smith H.O."/>
            <person name="Gibbs R.A."/>
            <person name="Myers E.W."/>
            <person name="Rubin G.M."/>
            <person name="Venter J.C."/>
        </authorList>
    </citation>
    <scope>NUCLEOTIDE SEQUENCE [LARGE SCALE GENOMIC DNA]</scope>
    <source>
        <strain>Berkeley</strain>
    </source>
</reference>
<reference key="3">
    <citation type="journal article" date="2002" name="Genome Biol.">
        <title>Annotation of the Drosophila melanogaster euchromatic genome: a systematic review.</title>
        <authorList>
            <person name="Misra S."/>
            <person name="Crosby M.A."/>
            <person name="Mungall C.J."/>
            <person name="Matthews B.B."/>
            <person name="Campbell K.S."/>
            <person name="Hradecky P."/>
            <person name="Huang Y."/>
            <person name="Kaminker J.S."/>
            <person name="Millburn G.H."/>
            <person name="Prochnik S.E."/>
            <person name="Smith C.D."/>
            <person name="Tupy J.L."/>
            <person name="Whitfield E.J."/>
            <person name="Bayraktaroglu L."/>
            <person name="Berman B.P."/>
            <person name="Bettencourt B.R."/>
            <person name="Celniker S.E."/>
            <person name="de Grey A.D.N.J."/>
            <person name="Drysdale R.A."/>
            <person name="Harris N.L."/>
            <person name="Richter J."/>
            <person name="Russo S."/>
            <person name="Schroeder A.J."/>
            <person name="Shu S.Q."/>
            <person name="Stapleton M."/>
            <person name="Yamada C."/>
            <person name="Ashburner M."/>
            <person name="Gelbart W.M."/>
            <person name="Rubin G.M."/>
            <person name="Lewis S.E."/>
        </authorList>
    </citation>
    <scope>GENOME REANNOTATION</scope>
    <source>
        <strain>Berkeley</strain>
    </source>
</reference>
<reference key="4">
    <citation type="journal article" date="2000" name="Science">
        <title>From sequence to chromosome: the tip of the X chromosome of D. melanogaster.</title>
        <authorList>
            <person name="Benos P.V."/>
            <person name="Gatt M.K."/>
            <person name="Ashburner M."/>
            <person name="Murphy L."/>
            <person name="Harris D."/>
            <person name="Barrell B.G."/>
            <person name="Ferraz C."/>
            <person name="Vidal S."/>
            <person name="Brun C."/>
            <person name="Demailles J."/>
            <person name="Cadieu E."/>
            <person name="Dreano S."/>
            <person name="Gloux S."/>
            <person name="Lelaure V."/>
            <person name="Mottier S."/>
            <person name="Galibert F."/>
            <person name="Borkova D."/>
            <person name="Minana B."/>
            <person name="Kafatos F.C."/>
            <person name="Louis C."/>
            <person name="Siden-Kiamos I."/>
            <person name="Bolshakov S."/>
            <person name="Papagiannakis G."/>
            <person name="Spanos L."/>
            <person name="Cox S."/>
            <person name="Madueno E."/>
            <person name="de Pablos B."/>
            <person name="Modolell J."/>
            <person name="Peter A."/>
            <person name="Schoettler P."/>
            <person name="Werner M."/>
            <person name="Mourkioti F."/>
            <person name="Beinert N."/>
            <person name="Dowe G."/>
            <person name="Schaefer U."/>
            <person name="Jaeckle H."/>
            <person name="Bucheton A."/>
            <person name="Callister D.M."/>
            <person name="Campbell L.A."/>
            <person name="Darlamitsou A."/>
            <person name="Henderson N.S."/>
            <person name="McMillan P.J."/>
            <person name="Salles C."/>
            <person name="Tait E.A."/>
            <person name="Valenti P."/>
            <person name="Saunders R.D.C."/>
            <person name="Glover D.M."/>
        </authorList>
    </citation>
    <scope>NUCLEOTIDE SEQUENCE [LARGE SCALE GENOMIC DNA]</scope>
    <source>
        <strain>Oregon-R</strain>
    </source>
</reference>
<reference key="5">
    <citation type="journal article" date="2002" name="Genome Biol.">
        <title>A Drosophila full-length cDNA resource.</title>
        <authorList>
            <person name="Stapleton M."/>
            <person name="Carlson J.W."/>
            <person name="Brokstein P."/>
            <person name="Yu C."/>
            <person name="Champe M."/>
            <person name="George R.A."/>
            <person name="Guarin H."/>
            <person name="Kronmiller B."/>
            <person name="Pacleb J.M."/>
            <person name="Park S."/>
            <person name="Wan K.H."/>
            <person name="Rubin G.M."/>
            <person name="Celniker S.E."/>
        </authorList>
    </citation>
    <scope>NUCLEOTIDE SEQUENCE [LARGE SCALE MRNA]</scope>
    <source>
        <strain>Berkeley</strain>
        <tissue>Embryo</tissue>
    </source>
</reference>
<proteinExistence type="evidence at transcript level"/>
<accession>P40139</accession>
<accession>O76916</accession>
<accession>Q9V3M0</accession>
<name>NG2_DROME</name>
<gene>
    <name type="primary">ng2</name>
    <name type="ORF">CG14266</name>
</gene>
<evidence type="ECO:0000255" key="1"/>
<evidence type="ECO:0000256" key="2">
    <source>
        <dbReference type="SAM" id="MobiDB-lite"/>
    </source>
</evidence>
<evidence type="ECO:0000305" key="3"/>
<keyword id="KW-1185">Reference proteome</keyword>
<keyword id="KW-0677">Repeat</keyword>
<keyword id="KW-0964">Secreted</keyword>
<keyword id="KW-0732">Signal</keyword>
<protein>
    <recommendedName>
        <fullName>Protein new-glue 2</fullName>
        <shortName>NG-2</shortName>
    </recommendedName>
</protein>